<reference key="1">
    <citation type="journal article" date="1992" name="J. Cell Biol.">
        <title>Characterization of the major hnRNP proteins from Drosophila melanogaster.</title>
        <authorList>
            <person name="Matunis E.L."/>
            <person name="Matunis M.J."/>
            <person name="Dreyfuss G."/>
        </authorList>
    </citation>
    <scope>NUCLEOTIDE SEQUENCE [MRNA] (ISOFORMS B AND C)</scope>
    <source>
        <strain>Canton-S</strain>
        <tissue>Embryo</tissue>
    </source>
</reference>
<reference key="2">
    <citation type="journal article" date="1993" name="Genes Dev.">
        <title>Initial organization of the Drosophila dorsoventral axis depends on an RNA-binding protein encoded by the squid gene.</title>
        <authorList>
            <person name="Kelley R.L."/>
        </authorList>
    </citation>
    <scope>NUCLEOTIDE SEQUENCE [GENOMIC DNA]</scope>
    <scope>ALTERNATIVE SPLICING</scope>
    <scope>FUNCTION</scope>
    <scope>SUBCELLULAR LOCATION</scope>
    <scope>DISRUPTION PHENOTYPE</scope>
    <source>
        <tissue>Ovary</tissue>
    </source>
</reference>
<reference key="3">
    <citation type="journal article" date="2000" name="Science">
        <title>The genome sequence of Drosophila melanogaster.</title>
        <authorList>
            <person name="Adams M.D."/>
            <person name="Celniker S.E."/>
            <person name="Holt R.A."/>
            <person name="Evans C.A."/>
            <person name="Gocayne J.D."/>
            <person name="Amanatides P.G."/>
            <person name="Scherer S.E."/>
            <person name="Li P.W."/>
            <person name="Hoskins R.A."/>
            <person name="Galle R.F."/>
            <person name="George R.A."/>
            <person name="Lewis S.E."/>
            <person name="Richards S."/>
            <person name="Ashburner M."/>
            <person name="Henderson S.N."/>
            <person name="Sutton G.G."/>
            <person name="Wortman J.R."/>
            <person name="Yandell M.D."/>
            <person name="Zhang Q."/>
            <person name="Chen L.X."/>
            <person name="Brandon R.C."/>
            <person name="Rogers Y.-H.C."/>
            <person name="Blazej R.G."/>
            <person name="Champe M."/>
            <person name="Pfeiffer B.D."/>
            <person name="Wan K.H."/>
            <person name="Doyle C."/>
            <person name="Baxter E.G."/>
            <person name="Helt G."/>
            <person name="Nelson C.R."/>
            <person name="Miklos G.L.G."/>
            <person name="Abril J.F."/>
            <person name="Agbayani A."/>
            <person name="An H.-J."/>
            <person name="Andrews-Pfannkoch C."/>
            <person name="Baldwin D."/>
            <person name="Ballew R.M."/>
            <person name="Basu A."/>
            <person name="Baxendale J."/>
            <person name="Bayraktaroglu L."/>
            <person name="Beasley E.M."/>
            <person name="Beeson K.Y."/>
            <person name="Benos P.V."/>
            <person name="Berman B.P."/>
            <person name="Bhandari D."/>
            <person name="Bolshakov S."/>
            <person name="Borkova D."/>
            <person name="Botchan M.R."/>
            <person name="Bouck J."/>
            <person name="Brokstein P."/>
            <person name="Brottier P."/>
            <person name="Burtis K.C."/>
            <person name="Busam D.A."/>
            <person name="Butler H."/>
            <person name="Cadieu E."/>
            <person name="Center A."/>
            <person name="Chandra I."/>
            <person name="Cherry J.M."/>
            <person name="Cawley S."/>
            <person name="Dahlke C."/>
            <person name="Davenport L.B."/>
            <person name="Davies P."/>
            <person name="de Pablos B."/>
            <person name="Delcher A."/>
            <person name="Deng Z."/>
            <person name="Mays A.D."/>
            <person name="Dew I."/>
            <person name="Dietz S.M."/>
            <person name="Dodson K."/>
            <person name="Doup L.E."/>
            <person name="Downes M."/>
            <person name="Dugan-Rocha S."/>
            <person name="Dunkov B.C."/>
            <person name="Dunn P."/>
            <person name="Durbin K.J."/>
            <person name="Evangelista C.C."/>
            <person name="Ferraz C."/>
            <person name="Ferriera S."/>
            <person name="Fleischmann W."/>
            <person name="Fosler C."/>
            <person name="Gabrielian A.E."/>
            <person name="Garg N.S."/>
            <person name="Gelbart W.M."/>
            <person name="Glasser K."/>
            <person name="Glodek A."/>
            <person name="Gong F."/>
            <person name="Gorrell J.H."/>
            <person name="Gu Z."/>
            <person name="Guan P."/>
            <person name="Harris M."/>
            <person name="Harris N.L."/>
            <person name="Harvey D.A."/>
            <person name="Heiman T.J."/>
            <person name="Hernandez J.R."/>
            <person name="Houck J."/>
            <person name="Hostin D."/>
            <person name="Houston K.A."/>
            <person name="Howland T.J."/>
            <person name="Wei M.-H."/>
            <person name="Ibegwam C."/>
            <person name="Jalali M."/>
            <person name="Kalush F."/>
            <person name="Karpen G.H."/>
            <person name="Ke Z."/>
            <person name="Kennison J.A."/>
            <person name="Ketchum K.A."/>
            <person name="Kimmel B.E."/>
            <person name="Kodira C.D."/>
            <person name="Kraft C.L."/>
            <person name="Kravitz S."/>
            <person name="Kulp D."/>
            <person name="Lai Z."/>
            <person name="Lasko P."/>
            <person name="Lei Y."/>
            <person name="Levitsky A.A."/>
            <person name="Li J.H."/>
            <person name="Li Z."/>
            <person name="Liang Y."/>
            <person name="Lin X."/>
            <person name="Liu X."/>
            <person name="Mattei B."/>
            <person name="McIntosh T.C."/>
            <person name="McLeod M.P."/>
            <person name="McPherson D."/>
            <person name="Merkulov G."/>
            <person name="Milshina N.V."/>
            <person name="Mobarry C."/>
            <person name="Morris J."/>
            <person name="Moshrefi A."/>
            <person name="Mount S.M."/>
            <person name="Moy M."/>
            <person name="Murphy B."/>
            <person name="Murphy L."/>
            <person name="Muzny D.M."/>
            <person name="Nelson D.L."/>
            <person name="Nelson D.R."/>
            <person name="Nelson K.A."/>
            <person name="Nixon K."/>
            <person name="Nusskern D.R."/>
            <person name="Pacleb J.M."/>
            <person name="Palazzolo M."/>
            <person name="Pittman G.S."/>
            <person name="Pan S."/>
            <person name="Pollard J."/>
            <person name="Puri V."/>
            <person name="Reese M.G."/>
            <person name="Reinert K."/>
            <person name="Remington K."/>
            <person name="Saunders R.D.C."/>
            <person name="Scheeler F."/>
            <person name="Shen H."/>
            <person name="Shue B.C."/>
            <person name="Siden-Kiamos I."/>
            <person name="Simpson M."/>
            <person name="Skupski M.P."/>
            <person name="Smith T.J."/>
            <person name="Spier E."/>
            <person name="Spradling A.C."/>
            <person name="Stapleton M."/>
            <person name="Strong R."/>
            <person name="Sun E."/>
            <person name="Svirskas R."/>
            <person name="Tector C."/>
            <person name="Turner R."/>
            <person name="Venter E."/>
            <person name="Wang A.H."/>
            <person name="Wang X."/>
            <person name="Wang Z.-Y."/>
            <person name="Wassarman D.A."/>
            <person name="Weinstock G.M."/>
            <person name="Weissenbach J."/>
            <person name="Williams S.M."/>
            <person name="Woodage T."/>
            <person name="Worley K.C."/>
            <person name="Wu D."/>
            <person name="Yang S."/>
            <person name="Yao Q.A."/>
            <person name="Ye J."/>
            <person name="Yeh R.-F."/>
            <person name="Zaveri J.S."/>
            <person name="Zhan M."/>
            <person name="Zhang G."/>
            <person name="Zhao Q."/>
            <person name="Zheng L."/>
            <person name="Zheng X.H."/>
            <person name="Zhong F.N."/>
            <person name="Zhong W."/>
            <person name="Zhou X."/>
            <person name="Zhu S.C."/>
            <person name="Zhu X."/>
            <person name="Smith H.O."/>
            <person name="Gibbs R.A."/>
            <person name="Myers E.W."/>
            <person name="Rubin G.M."/>
            <person name="Venter J.C."/>
        </authorList>
    </citation>
    <scope>NUCLEOTIDE SEQUENCE [LARGE SCALE GENOMIC DNA]</scope>
    <source>
        <strain>Berkeley</strain>
    </source>
</reference>
<reference key="4">
    <citation type="journal article" date="2002" name="Genome Biol.">
        <title>Annotation of the Drosophila melanogaster euchromatic genome: a systematic review.</title>
        <authorList>
            <person name="Misra S."/>
            <person name="Crosby M.A."/>
            <person name="Mungall C.J."/>
            <person name="Matthews B.B."/>
            <person name="Campbell K.S."/>
            <person name="Hradecky P."/>
            <person name="Huang Y."/>
            <person name="Kaminker J.S."/>
            <person name="Millburn G.H."/>
            <person name="Prochnik S.E."/>
            <person name="Smith C.D."/>
            <person name="Tupy J.L."/>
            <person name="Whitfield E.J."/>
            <person name="Bayraktaroglu L."/>
            <person name="Berman B.P."/>
            <person name="Bettencourt B.R."/>
            <person name="Celniker S.E."/>
            <person name="de Grey A.D.N.J."/>
            <person name="Drysdale R.A."/>
            <person name="Harris N.L."/>
            <person name="Richter J."/>
            <person name="Russo S."/>
            <person name="Schroeder A.J."/>
            <person name="Shu S.Q."/>
            <person name="Stapleton M."/>
            <person name="Yamada C."/>
            <person name="Ashburner M."/>
            <person name="Gelbart W.M."/>
            <person name="Rubin G.M."/>
            <person name="Lewis S.E."/>
        </authorList>
    </citation>
    <scope>GENOME REANNOTATION</scope>
    <scope>ALTERNATIVE SPLICING</scope>
    <source>
        <strain>Berkeley</strain>
    </source>
</reference>
<reference key="5">
    <citation type="journal article" date="2002" name="Genome Biol.">
        <title>A Drosophila full-length cDNA resource.</title>
        <authorList>
            <person name="Stapleton M."/>
            <person name="Carlson J.W."/>
            <person name="Brokstein P."/>
            <person name="Yu C."/>
            <person name="Champe M."/>
            <person name="George R.A."/>
            <person name="Guarin H."/>
            <person name="Kronmiller B."/>
            <person name="Pacleb J.M."/>
            <person name="Park S."/>
            <person name="Wan K.H."/>
            <person name="Rubin G.M."/>
            <person name="Celniker S.E."/>
        </authorList>
    </citation>
    <scope>NUCLEOTIDE SEQUENCE [LARGE SCALE MRNA] (ISOFORM A)</scope>
    <source>
        <strain>Berkeley</strain>
        <tissue>Embryo</tissue>
        <tissue>Head</tissue>
    </source>
</reference>
<reference key="6">
    <citation type="submission" date="2006-11" db="EMBL/GenBank/DDBJ databases">
        <authorList>
            <person name="Stapleton M."/>
            <person name="Carlson J.W."/>
            <person name="Frise E."/>
            <person name="Kapadia B."/>
            <person name="Park S."/>
            <person name="Wan K.H."/>
            <person name="Yu C."/>
            <person name="Celniker S.E."/>
        </authorList>
    </citation>
    <scope>NUCLEOTIDE SEQUENCE [LARGE SCALE MRNA] (ISOFORM C)</scope>
    <source>
        <strain>Berkeley</strain>
        <tissue>Embryo</tissue>
    </source>
</reference>
<reference key="7">
    <citation type="journal article" date="1993" name="Mol. Cell. Biol.">
        <title>Isolation of RRM-type RNA-binding protein genes and the analysis of their relatedness by using a numerical approach.</title>
        <authorList>
            <person name="Kim Y.-J."/>
            <person name="Baker B.S."/>
        </authorList>
    </citation>
    <scope>NUCLEOTIDE SEQUENCE [MRNA] OF 59-102 (ISOFORMS A/B/C)</scope>
</reference>
<reference key="8">
    <citation type="journal article" date="1999" name="Genes Dev.">
        <title>Specific isoforms of squid, a Drosophila hnRNP, perform distinct roles in Gurken localization during oogenesis.</title>
        <authorList>
            <person name="Norvell A."/>
            <person name="Kelley R.L."/>
            <person name="Wehr K."/>
            <person name="Schuepbach T."/>
        </authorList>
    </citation>
    <scope>FUNCTION</scope>
    <scope>INTERACTION WITH TNPO; FS(1)K10; BRU1 AND GRK MRNA</scope>
    <scope>SUBCELLULAR LOCATION</scope>
    <scope>DOMAIN M9</scope>
</reference>
<reference key="9">
    <citation type="journal article" date="2004" name="Development">
        <title>Hrb27C, Sqd and Otu cooperatively regulate gurken RNA localization and mediate nurse cell chromosome dispersion in Drosophila oogenesis.</title>
        <authorList>
            <person name="Goodrich J.S."/>
            <person name="Clouse K.N."/>
            <person name="Schuepbach T."/>
        </authorList>
    </citation>
    <scope>FUNCTION</scope>
    <scope>INTERACTION WITH HRB27C</scope>
</reference>
<reference key="10">
    <citation type="journal article" date="2007" name="Mol. Biosyst.">
        <title>An integrated chemical, mass spectrometric and computational strategy for (quantitative) phosphoproteomics: application to Drosophila melanogaster Kc167 cells.</title>
        <authorList>
            <person name="Bodenmiller B."/>
            <person name="Mueller L.N."/>
            <person name="Pedrioli P.G.A."/>
            <person name="Pflieger D."/>
            <person name="Juenger M.A."/>
            <person name="Eng J.K."/>
            <person name="Aebersold R."/>
            <person name="Tao W.A."/>
        </authorList>
    </citation>
    <scope>PHOSPHORYLATION [LARGE SCALE ANALYSIS] AT SER-148</scope>
    <scope>IDENTIFICATION BY MASS SPECTROMETRY</scope>
</reference>
<name>SQD_DROME</name>
<accession>Q08473</accession>
<accession>Q26273</accession>
<accession>Q3ZAN7</accession>
<accession>Q8IH71</accession>
<accession>Q8INH1</accession>
<accession>Q8MSY1</accession>
<accession>Q9VFT5</accession>
<accession>Q9VFT6</accession>
<gene>
    <name evidence="14" type="primary">sqd</name>
    <name evidence="14" type="synonym">hrp40</name>
    <name evidence="14" type="ORF">CG16901</name>
</gene>
<dbReference type="EMBL" id="X62637">
    <property type="protein sequence ID" value="CAA44503.1"/>
    <property type="molecule type" value="mRNA"/>
</dbReference>
<dbReference type="EMBL" id="X62638">
    <property type="protein sequence ID" value="CAA44504.1"/>
    <property type="molecule type" value="mRNA"/>
</dbReference>
<dbReference type="EMBL" id="S61875">
    <property type="protein sequence ID" value="AAB26988.1"/>
    <property type="molecule type" value="Genomic_DNA"/>
</dbReference>
<dbReference type="EMBL" id="S62100">
    <property type="protein sequence ID" value="AAB26989.1"/>
    <property type="molecule type" value="Genomic_DNA"/>
</dbReference>
<dbReference type="EMBL" id="S61875">
    <property type="protein sequence ID" value="AAB26989.1"/>
    <property type="status" value="JOINED"/>
    <property type="molecule type" value="Genomic_DNA"/>
</dbReference>
<dbReference type="EMBL" id="AE014297">
    <property type="protein sequence ID" value="AAF54963.2"/>
    <property type="molecule type" value="Genomic_DNA"/>
</dbReference>
<dbReference type="EMBL" id="AE014297">
    <property type="protein sequence ID" value="AAF54964.2"/>
    <property type="molecule type" value="Genomic_DNA"/>
</dbReference>
<dbReference type="EMBL" id="AE014297">
    <property type="protein sequence ID" value="AAN13570.1"/>
    <property type="molecule type" value="Genomic_DNA"/>
</dbReference>
<dbReference type="EMBL" id="AE014297">
    <property type="protein sequence ID" value="AAS65146.1"/>
    <property type="molecule type" value="Genomic_DNA"/>
</dbReference>
<dbReference type="EMBL" id="AY118501">
    <property type="protein sequence ID" value="AAM49870.1"/>
    <property type="molecule type" value="mRNA"/>
</dbReference>
<dbReference type="EMBL" id="BT001384">
    <property type="protein sequence ID" value="AAN71139.1"/>
    <property type="molecule type" value="mRNA"/>
</dbReference>
<dbReference type="EMBL" id="BT003283">
    <property type="protein sequence ID" value="AAO25040.1"/>
    <property type="molecule type" value="mRNA"/>
</dbReference>
<dbReference type="EMBL" id="BT023832">
    <property type="protein sequence ID" value="AAZ86753.1"/>
    <property type="molecule type" value="mRNA"/>
</dbReference>
<dbReference type="EMBL" id="S51693">
    <property type="protein sequence ID" value="AAB24624.1"/>
    <property type="molecule type" value="mRNA"/>
</dbReference>
<dbReference type="PIR" id="A47369">
    <property type="entry name" value="A47369"/>
</dbReference>
<dbReference type="PIR" id="B41732">
    <property type="entry name" value="B41732"/>
</dbReference>
<dbReference type="PIR" id="B47369">
    <property type="entry name" value="B47369"/>
</dbReference>
<dbReference type="PIR" id="C48110">
    <property type="entry name" value="C48110"/>
</dbReference>
<dbReference type="RefSeq" id="NP_001247088.1">
    <molecule id="Q08473-3"/>
    <property type="nucleotide sequence ID" value="NM_001260159.2"/>
</dbReference>
<dbReference type="RefSeq" id="NP_652209.1">
    <molecule id="Q08473-3"/>
    <property type="nucleotide sequence ID" value="NM_143952.2"/>
</dbReference>
<dbReference type="RefSeq" id="NP_731825.1">
    <molecule id="Q08473-1"/>
    <property type="nucleotide sequence ID" value="NM_169528.2"/>
</dbReference>
<dbReference type="RefSeq" id="NP_731826.1">
    <molecule id="Q08473-2"/>
    <property type="nucleotide sequence ID" value="NM_169529.3"/>
</dbReference>
<dbReference type="RefSeq" id="NP_996203.1">
    <molecule id="Q08473-4"/>
    <property type="nucleotide sequence ID" value="NM_206481.2"/>
</dbReference>
<dbReference type="SMR" id="Q08473"/>
<dbReference type="BioGRID" id="66748">
    <property type="interactions" value="50"/>
</dbReference>
<dbReference type="FunCoup" id="Q08473">
    <property type="interactions" value="1389"/>
</dbReference>
<dbReference type="IntAct" id="Q08473">
    <property type="interactions" value="30"/>
</dbReference>
<dbReference type="STRING" id="7227.FBpp0082320"/>
<dbReference type="iPTMnet" id="Q08473"/>
<dbReference type="PaxDb" id="7227-FBpp0082320"/>
<dbReference type="DNASU" id="41666"/>
<dbReference type="EnsemblMetazoa" id="FBtr0082854">
    <molecule id="Q08473-2"/>
    <property type="protein sequence ID" value="FBpp0082319"/>
    <property type="gene ID" value="FBgn0263396"/>
</dbReference>
<dbReference type="EnsemblMetazoa" id="FBtr0082855">
    <molecule id="Q08473-1"/>
    <property type="protein sequence ID" value="FBpp0082320"/>
    <property type="gene ID" value="FBgn0263396"/>
</dbReference>
<dbReference type="EnsemblMetazoa" id="FBtr0082856">
    <molecule id="Q08473-3"/>
    <property type="protein sequence ID" value="FBpp0082321"/>
    <property type="gene ID" value="FBgn0263396"/>
</dbReference>
<dbReference type="EnsemblMetazoa" id="FBtr0082857">
    <molecule id="Q08473-4"/>
    <property type="protein sequence ID" value="FBpp0089309"/>
    <property type="gene ID" value="FBgn0263396"/>
</dbReference>
<dbReference type="EnsemblMetazoa" id="FBtr0309094">
    <molecule id="Q08473-3"/>
    <property type="protein sequence ID" value="FBpp0301102"/>
    <property type="gene ID" value="FBgn0263396"/>
</dbReference>
<dbReference type="GeneID" id="41666"/>
<dbReference type="KEGG" id="dme:Dmel_CG16901"/>
<dbReference type="AGR" id="FB:FBgn0263396"/>
<dbReference type="CTD" id="41666"/>
<dbReference type="FlyBase" id="FBgn0263396">
    <property type="gene designation" value="sqd"/>
</dbReference>
<dbReference type="VEuPathDB" id="VectorBase:FBgn0263396"/>
<dbReference type="eggNOG" id="KOG4205">
    <property type="taxonomic scope" value="Eukaryota"/>
</dbReference>
<dbReference type="GeneTree" id="ENSGT00940000175437"/>
<dbReference type="InParanoid" id="Q08473"/>
<dbReference type="OMA" id="QVDTEMN"/>
<dbReference type="OrthoDB" id="1875751at2759"/>
<dbReference type="PhylomeDB" id="Q08473"/>
<dbReference type="Reactome" id="R-DME-450408">
    <property type="pathway name" value="AUF1 (hnRNP D0) binds and destabilizes mRNA"/>
</dbReference>
<dbReference type="Reactome" id="R-DME-72163">
    <property type="pathway name" value="mRNA Splicing - Major Pathway"/>
</dbReference>
<dbReference type="Reactome" id="R-DME-72203">
    <property type="pathway name" value="Processing of Capped Intron-Containing Pre-mRNA"/>
</dbReference>
<dbReference type="SignaLink" id="Q08473"/>
<dbReference type="BioGRID-ORCS" id="41666">
    <property type="hits" value="1 hit in 3 CRISPR screens"/>
</dbReference>
<dbReference type="CD-CODE" id="19A54EA0">
    <property type="entry name" value="Sponge body"/>
</dbReference>
<dbReference type="ChiTaRS" id="sqd">
    <property type="organism name" value="fly"/>
</dbReference>
<dbReference type="GenomeRNAi" id="41666"/>
<dbReference type="PRO" id="PR:Q08473"/>
<dbReference type="Proteomes" id="UP000000803">
    <property type="component" value="Chromosome 3R"/>
</dbReference>
<dbReference type="Bgee" id="FBgn0263396">
    <property type="expression patterns" value="Expressed in enteroblast (Drosophila) in digestive tract and 290 other cell types or tissues"/>
</dbReference>
<dbReference type="ExpressionAtlas" id="Q08473">
    <property type="expression patterns" value="baseline and differential"/>
</dbReference>
<dbReference type="GO" id="GO:0071013">
    <property type="term" value="C:catalytic step 2 spliceosome"/>
    <property type="evidence" value="ECO:0007005"/>
    <property type="project" value="FlyBase"/>
</dbReference>
<dbReference type="GO" id="GO:0000785">
    <property type="term" value="C:chromatin"/>
    <property type="evidence" value="ECO:0000314"/>
    <property type="project" value="FlyBase"/>
</dbReference>
<dbReference type="GO" id="GO:0005737">
    <property type="term" value="C:cytoplasm"/>
    <property type="evidence" value="ECO:0000304"/>
    <property type="project" value="FlyBase"/>
</dbReference>
<dbReference type="GO" id="GO:0005654">
    <property type="term" value="C:nucleoplasm"/>
    <property type="evidence" value="ECO:0000318"/>
    <property type="project" value="GO_Central"/>
</dbReference>
<dbReference type="GO" id="GO:0005634">
    <property type="term" value="C:nucleus"/>
    <property type="evidence" value="ECO:0000314"/>
    <property type="project" value="FlyBase"/>
</dbReference>
<dbReference type="GO" id="GO:0035062">
    <property type="term" value="C:omega speckle"/>
    <property type="evidence" value="ECO:0000314"/>
    <property type="project" value="FlyBase"/>
</dbReference>
<dbReference type="GO" id="GO:0005703">
    <property type="term" value="C:polytene chromosome puff"/>
    <property type="evidence" value="ECO:0000314"/>
    <property type="project" value="FlyBase"/>
</dbReference>
<dbReference type="GO" id="GO:0071011">
    <property type="term" value="C:precatalytic spliceosome"/>
    <property type="evidence" value="ECO:0007005"/>
    <property type="project" value="FlyBase"/>
</dbReference>
<dbReference type="GO" id="GO:0003730">
    <property type="term" value="F:mRNA 3'-UTR binding"/>
    <property type="evidence" value="ECO:0000304"/>
    <property type="project" value="FlyBase"/>
</dbReference>
<dbReference type="GO" id="GO:0003723">
    <property type="term" value="F:RNA binding"/>
    <property type="evidence" value="ECO:0000318"/>
    <property type="project" value="GO_Central"/>
</dbReference>
<dbReference type="GO" id="GO:0008069">
    <property type="term" value="P:dorsal/ventral axis specification, ovarian follicular epithelium"/>
    <property type="evidence" value="ECO:0000315"/>
    <property type="project" value="FlyBase"/>
</dbReference>
<dbReference type="GO" id="GO:0009953">
    <property type="term" value="P:dorsal/ventral pattern formation"/>
    <property type="evidence" value="ECO:0000315"/>
    <property type="project" value="FlyBase"/>
</dbReference>
<dbReference type="GO" id="GO:0007297">
    <property type="term" value="P:follicle cell of egg chamber migration"/>
    <property type="evidence" value="ECO:0000315"/>
    <property type="project" value="FlyBase"/>
</dbReference>
<dbReference type="GO" id="GO:0007293">
    <property type="term" value="P:germarium-derived egg chamber formation"/>
    <property type="evidence" value="ECO:0000315"/>
    <property type="project" value="FlyBase"/>
</dbReference>
<dbReference type="GO" id="GO:0008298">
    <property type="term" value="P:intracellular mRNA localization"/>
    <property type="evidence" value="ECO:0000304"/>
    <property type="project" value="FlyBase"/>
</dbReference>
<dbReference type="GO" id="GO:0006406">
    <property type="term" value="P:mRNA export from nucleus"/>
    <property type="evidence" value="ECO:0000303"/>
    <property type="project" value="FlyBase"/>
</dbReference>
<dbReference type="GO" id="GO:0000398">
    <property type="term" value="P:mRNA splicing, via spliceosome"/>
    <property type="evidence" value="ECO:0000305"/>
    <property type="project" value="FlyBase"/>
</dbReference>
<dbReference type="GO" id="GO:0033119">
    <property type="term" value="P:negative regulation of RNA splicing"/>
    <property type="evidence" value="ECO:0000315"/>
    <property type="project" value="FlyBase"/>
</dbReference>
<dbReference type="GO" id="GO:0017148">
    <property type="term" value="P:negative regulation of translation"/>
    <property type="evidence" value="ECO:0000304"/>
    <property type="project" value="FlyBase"/>
</dbReference>
<dbReference type="GO" id="GO:0000184">
    <property type="term" value="P:nuclear-transcribed mRNA catabolic process, nonsense-mediated decay"/>
    <property type="evidence" value="ECO:0000304"/>
    <property type="project" value="FlyBase"/>
</dbReference>
<dbReference type="GO" id="GO:0007314">
    <property type="term" value="P:oocyte anterior/posterior axis specification"/>
    <property type="evidence" value="ECO:0000315"/>
    <property type="project" value="FlyBase"/>
</dbReference>
<dbReference type="GO" id="GO:0030720">
    <property type="term" value="P:oocyte localization involved in germarium-derived egg chamber formation"/>
    <property type="evidence" value="ECO:0000315"/>
    <property type="project" value="FlyBase"/>
</dbReference>
<dbReference type="GO" id="GO:0016325">
    <property type="term" value="P:oocyte microtubule cytoskeleton organization"/>
    <property type="evidence" value="ECO:0000315"/>
    <property type="project" value="FlyBase"/>
</dbReference>
<dbReference type="GO" id="GO:0048477">
    <property type="term" value="P:oogenesis"/>
    <property type="evidence" value="ECO:0000315"/>
    <property type="project" value="FlyBase"/>
</dbReference>
<dbReference type="GO" id="GO:0019094">
    <property type="term" value="P:pole plasm mRNA localization"/>
    <property type="evidence" value="ECO:0000315"/>
    <property type="project" value="FlyBase"/>
</dbReference>
<dbReference type="GO" id="GO:0045451">
    <property type="term" value="P:pole plasm oskar mRNA localization"/>
    <property type="evidence" value="ECO:0000270"/>
    <property type="project" value="FlyBase"/>
</dbReference>
<dbReference type="GO" id="GO:0000381">
    <property type="term" value="P:regulation of alternative mRNA splicing, via spliceosome"/>
    <property type="evidence" value="ECO:0007001"/>
    <property type="project" value="FlyBase"/>
</dbReference>
<dbReference type="GO" id="GO:0010468">
    <property type="term" value="P:regulation of gene expression"/>
    <property type="evidence" value="ECO:0000318"/>
    <property type="project" value="GO_Central"/>
</dbReference>
<dbReference type="GO" id="GO:0006405">
    <property type="term" value="P:RNA export from nucleus"/>
    <property type="evidence" value="ECO:0000304"/>
    <property type="project" value="FlyBase"/>
</dbReference>
<dbReference type="CDD" id="cd12325">
    <property type="entry name" value="RRM1_hnRNPA_hnRNPD_like"/>
    <property type="match status" value="1"/>
</dbReference>
<dbReference type="CDD" id="cd12329">
    <property type="entry name" value="RRM2_hnRNPD_like"/>
    <property type="match status" value="1"/>
</dbReference>
<dbReference type="FunFam" id="3.30.70.330:FF:000477">
    <property type="entry name" value="Heterogeneous nuclear ribonucleoprotein D"/>
    <property type="match status" value="1"/>
</dbReference>
<dbReference type="FunFam" id="3.30.70.330:FF:000867">
    <property type="entry name" value="RNA-binding protein squid"/>
    <property type="match status" value="1"/>
</dbReference>
<dbReference type="Gene3D" id="3.30.70.330">
    <property type="match status" value="2"/>
</dbReference>
<dbReference type="InterPro" id="IPR012677">
    <property type="entry name" value="Nucleotide-bd_a/b_plait_sf"/>
</dbReference>
<dbReference type="InterPro" id="IPR035979">
    <property type="entry name" value="RBD_domain_sf"/>
</dbReference>
<dbReference type="InterPro" id="IPR000504">
    <property type="entry name" value="RRM_dom"/>
</dbReference>
<dbReference type="PANTHER" id="PTHR48033">
    <property type="entry name" value="RNA-BINDING (RRM/RBD/RNP MOTIFS) FAMILY PROTEIN"/>
    <property type="match status" value="1"/>
</dbReference>
<dbReference type="PANTHER" id="PTHR48033:SF10">
    <property type="entry name" value="RNA-BINDING PROTEIN SQUID"/>
    <property type="match status" value="1"/>
</dbReference>
<dbReference type="Pfam" id="PF00076">
    <property type="entry name" value="RRM_1"/>
    <property type="match status" value="2"/>
</dbReference>
<dbReference type="SMART" id="SM00360">
    <property type="entry name" value="RRM"/>
    <property type="match status" value="2"/>
</dbReference>
<dbReference type="SUPFAM" id="SSF54928">
    <property type="entry name" value="RNA-binding domain, RBD"/>
    <property type="match status" value="2"/>
</dbReference>
<dbReference type="PROSITE" id="PS50102">
    <property type="entry name" value="RRM"/>
    <property type="match status" value="2"/>
</dbReference>
<sequence length="344" mass="36184">MAENKQVDTEINGEDFTKDVTADGPGSENGDAGAAGSTNGSSDNQSAASGQRDDDRKLFVGGLSWETTEKELRDHFGKYGEIESINVKTDPQTGRSRGFAFIVFTNTEAIDKVSAADEHIINSKKVDPKKAKARHGKIFVGGLTTEISDEEIKTYFGQFGNIVEVEMPFDKQKSQRKGFCFITFDSEQVVTDLLKTPKQKIAGKEVDVKRATPKPENQMMGGMRGGPRGGMRGGRGGYGGRGGYNNQWDGQGSYGGYGGGYGGYGAGGYGDYYAGGYYNGYDYGYDGYGYGGGFEGNGYGGGGGGNMGGGRGGPRGGGGPKGGGGFNGGKQRGGGGRQQRHQPY</sequence>
<comment type="function">
    <text evidence="3 4 7">Component of ribonucleosomes (PubMed:7684991). Could be needed to organize a concentration gradient of a dorsalizing morphogen (Dm) originating in the germinal vesicle (PubMed:7684991). At least one of the isoforms is essential in somatic tissues (PubMed:7684991). Interacts with grk mRNA (via 3' UTR) and involved in its localization to the dorsal anterior region of the oocyte during dorsal-ventral axis determination; may function as a ribonuclear protein complex together with otu and Hrb27C (PubMed:10197986, PubMed:15056611). Required for polytene chromosome dispersal in nurse cells during oogenesis; nuclear isoforms play a greater role in this than cytoplasmic isoforms (PubMed:15056611).</text>
</comment>
<comment type="function">
    <molecule>Isoform B</molecule>
    <text evidence="3 7">Required nonredundantly with isoform A/sqdA for dorsoventral pattern determination during oogenesis (PubMed:10197986). May be important in somatic tissues (PubMed:10197986, PubMed:7684991).</text>
</comment>
<comment type="function">
    <molecule>Isoform A</molecule>
    <text evidence="3">Required nonredundantly with isoform B/SqdS for dorsoventral pattern determination during oogenesis.</text>
</comment>
<comment type="function">
    <molecule>Isoform C</molecule>
    <text evidence="3">May lack a role in dorsoventral pattern determination during oogenesis (PubMed:10197986). May be important in somatic tissues (PubMed:10197986).</text>
</comment>
<comment type="subunit">
    <text evidence="3">Interacts with bru1/Bruno; the interaction is direct but weak, and may play a role in regulation of grk mRNA localization and translation.</text>
</comment>
<comment type="subunit">
    <molecule>Isoform B</molecule>
    <text evidence="3">Interacts (probably via M9 and M9-like motifs) with Tnpo/Transportin; the interaction is direct and is involved in nuclear localization (PubMed:10197986). Interacts with fs(1)K10 (via N-terminus); may be involved in localization of sqd in the oocyte during oogenesis (PubMed:10197986).</text>
</comment>
<comment type="subunit">
    <molecule>Isoform A</molecule>
    <text evidence="3 4">Interacts (via C-terminus) with Hrb27C; the interaction is RNA dependent (PubMed:15056611). Does not interact with Tnpo/Transportin (PubMed:10197986). Interacts with fs(1)K10 (via N-terminus); may be involved in localization of sqd in the oocyte during oogenesis (PubMed:10197986).</text>
</comment>
<comment type="subunit">
    <molecule>Isoform C</molecule>
    <text evidence="3">Interacts (probably via M9-like motif) with Tnpo/Transportin; the interaction is direct and is involved in nuclear localization (PubMed:10197986). Interacts with fs(1)K10 (via N-terminus); may be involved in localization of sqd in the oocyte during oogenesis (PubMed:10197986).</text>
</comment>
<comment type="subcellular location">
    <subcellularLocation>
        <location evidence="7">Nucleus</location>
    </subcellularLocation>
    <subcellularLocation>
        <location evidence="7">Cytoplasm</location>
    </subcellularLocation>
    <text evidence="3">Different isoforms show cell-type differential nuclear versus cytoplasmic localization properties.</text>
</comment>
<comment type="subcellular location">
    <molecule>Isoform B</molecule>
    <subcellularLocation>
        <location evidence="3">Nucleus</location>
    </subcellularLocation>
    <subcellularLocation>
        <location evidence="3">Cytoplasm</location>
    </subcellularLocation>
    <text evidence="3">Localizes predominantly to the nucleus in germline derived nurse cells and oocyte and in somatic egg chamber follicle cells during oogenesis.</text>
</comment>
<comment type="subcellular location">
    <molecule>Isoform A</molecule>
    <subcellularLocation>
        <location evidence="3">Cytoplasm</location>
    </subcellularLocation>
    <text evidence="3">Does not localize to the nucleus of germline cells or somatic egg chamber follicle cells during oogenesis.</text>
</comment>
<comment type="subcellular location">
    <molecule>Isoform C</molecule>
    <subcellularLocation>
        <location evidence="3">Nucleus</location>
    </subcellularLocation>
    <subcellularLocation>
        <location evidence="3">Cytoplasm</location>
    </subcellularLocation>
    <text evidence="3">Localizes predominantly to the nucleus of germline derived nurse cells during oogenesis but remians cytoplasmic in the oocyte.</text>
</comment>
<comment type="alternative products">
    <event type="alternative splicing"/>
    <isoform>
        <id>Q08473-1</id>
        <name evidence="14">B</name>
        <name evidence="10">SqdS</name>
        <name evidence="9">HRP40.2</name>
        <sequence type="displayed"/>
    </isoform>
    <isoform>
        <id>Q08473-2</id>
        <name evidence="14">A</name>
        <name evidence="10">SqdA</name>
        <name evidence="9">HRP40.1</name>
        <sequence type="described" ref="VSP_005876"/>
    </isoform>
    <isoform>
        <id>Q08473-3</id>
        <name evidence="14">C</name>
        <name evidence="14">E</name>
        <name evidence="10">SqdB</name>
        <sequence type="described" ref="VSP_005877"/>
    </isoform>
    <isoform>
        <id>Q08473-4</id>
        <name evidence="14">D</name>
        <sequence type="described" ref="VSP_011797"/>
    </isoform>
    <text evidence="5 7">A number of isoforms are produced.</text>
</comment>
<comment type="domain">
    <text evidence="3 13">Possesses 2 putative nuclear-localization domains, a M9 motif found only in isoform B (sqdS) and a M9-like motif found in all isoforms described (Probable). These may mediate interaction with Tnpo/Transportin and Transportin-dependent nuclear localization (PubMed:10197986).</text>
</comment>
<comment type="disruption phenotype">
    <text evidence="7">Semilethal in second to third instar (PubMed:7684991). Females are sterile and lay small eggs with a dorsalized phenotype (PubMed:7684991).</text>
</comment>
<proteinExistence type="evidence at protein level"/>
<evidence type="ECO:0000255" key="1">
    <source>
        <dbReference type="PROSITE-ProRule" id="PRU00176"/>
    </source>
</evidence>
<evidence type="ECO:0000256" key="2">
    <source>
        <dbReference type="SAM" id="MobiDB-lite"/>
    </source>
</evidence>
<evidence type="ECO:0000269" key="3">
    <source>
    </source>
</evidence>
<evidence type="ECO:0000269" key="4">
    <source>
    </source>
</evidence>
<evidence type="ECO:0000269" key="5">
    <source>
    </source>
</evidence>
<evidence type="ECO:0000269" key="6">
    <source>
    </source>
</evidence>
<evidence type="ECO:0000269" key="7">
    <source>
    </source>
</evidence>
<evidence type="ECO:0000303" key="8">
    <source>
    </source>
</evidence>
<evidence type="ECO:0000303" key="9">
    <source>
    </source>
</evidence>
<evidence type="ECO:0000303" key="10">
    <source>
    </source>
</evidence>
<evidence type="ECO:0000303" key="11">
    <source ref="6"/>
</evidence>
<evidence type="ECO:0000305" key="12"/>
<evidence type="ECO:0000305" key="13">
    <source>
    </source>
</evidence>
<evidence type="ECO:0000312" key="14">
    <source>
        <dbReference type="FlyBase" id="FBgn0263396"/>
    </source>
</evidence>
<evidence type="ECO:0000312" key="15">
    <source>
        <dbReference type="Proteomes" id="UP000000803"/>
    </source>
</evidence>
<feature type="chain" id="PRO_0000081959" description="RNA-binding protein squid">
    <location>
        <begin position="1"/>
        <end position="344"/>
    </location>
</feature>
<feature type="domain" description="RRM 1" evidence="1">
    <location>
        <begin position="56"/>
        <end position="138"/>
    </location>
</feature>
<feature type="domain" description="RRM 2" evidence="1">
    <location>
        <begin position="136"/>
        <end position="213"/>
    </location>
</feature>
<feature type="region of interest" description="Disordered" evidence="2">
    <location>
        <begin position="1"/>
        <end position="55"/>
    </location>
</feature>
<feature type="region of interest" description="Disordered" evidence="2">
    <location>
        <begin position="214"/>
        <end position="238"/>
    </location>
</feature>
<feature type="region of interest" description="M9-like motif" evidence="13">
    <location>
        <begin position="215"/>
        <end position="254"/>
    </location>
</feature>
<feature type="region of interest" description="M9 motif" evidence="13">
    <location>
        <begin position="300"/>
        <end position="338"/>
    </location>
</feature>
<feature type="region of interest" description="Disordered" evidence="2">
    <location>
        <begin position="301"/>
        <end position="344"/>
    </location>
</feature>
<feature type="compositionally biased region" description="Polar residues" evidence="2">
    <location>
        <begin position="36"/>
        <end position="49"/>
    </location>
</feature>
<feature type="compositionally biased region" description="Gly residues" evidence="2">
    <location>
        <begin position="222"/>
        <end position="238"/>
    </location>
</feature>
<feature type="compositionally biased region" description="Gly residues" evidence="2">
    <location>
        <begin position="301"/>
        <end position="337"/>
    </location>
</feature>
<feature type="modified residue" description="Phosphoserine" evidence="6">
    <location>
        <position position="148"/>
    </location>
</feature>
<feature type="splice variant" id="VSP_011797" description="In isoform D." evidence="12">
    <location>
        <begin position="1"/>
        <end position="166"/>
    </location>
</feature>
<feature type="splice variant" id="VSP_005876" description="In isoform A." evidence="8">
    <original>DGYGYGGGFEGNGYGGGGGGNMGGGRGGPRGGGGPKGGGGFNGGKQRGGGGRQQRHQPY</original>
    <variation>GKYNKQQSSAQNNYYNNNTSSNYHQNKNNSNNYQQF</variation>
    <location>
        <begin position="286"/>
        <end position="344"/>
    </location>
</feature>
<feature type="splice variant" id="VSP_005877" description="In isoform C." evidence="9 11">
    <location>
        <begin position="286"/>
        <end position="321"/>
    </location>
</feature>
<feature type="sequence conflict" description="In Ref. 7; AAB24624." evidence="12" ref="7">
    <original>S</original>
    <variation>N</variation>
    <location>
        <position position="84"/>
    </location>
</feature>
<feature type="sequence conflict" description="In Ref. 2; AAB26988/AAB26989." evidence="12" ref="2">
    <original>F</original>
    <variation>L</variation>
    <location>
        <position position="169"/>
    </location>
</feature>
<feature type="sequence conflict" description="In Ref. 1; CAA44504." evidence="12" ref="1">
    <original>G</original>
    <variation>GG</variation>
    <location>
        <position position="305"/>
    </location>
</feature>
<keyword id="KW-0025">Alternative splicing</keyword>
<keyword id="KW-0963">Cytoplasm</keyword>
<keyword id="KW-0539">Nucleus</keyword>
<keyword id="KW-0597">Phosphoprotein</keyword>
<keyword id="KW-1185">Reference proteome</keyword>
<keyword id="KW-0677">Repeat</keyword>
<keyword id="KW-0687">Ribonucleoprotein</keyword>
<keyword id="KW-0694">RNA-binding</keyword>
<protein>
    <recommendedName>
        <fullName evidence="12">RNA-binding protein squid</fullName>
    </recommendedName>
    <alternativeName>
        <fullName>Heterogeneous nuclear ribonucleoprotein 40</fullName>
        <shortName>HNRNP 40</shortName>
    </alternativeName>
</protein>
<organism evidence="15">
    <name type="scientific">Drosophila melanogaster</name>
    <name type="common">Fruit fly</name>
    <dbReference type="NCBI Taxonomy" id="7227"/>
    <lineage>
        <taxon>Eukaryota</taxon>
        <taxon>Metazoa</taxon>
        <taxon>Ecdysozoa</taxon>
        <taxon>Arthropoda</taxon>
        <taxon>Hexapoda</taxon>
        <taxon>Insecta</taxon>
        <taxon>Pterygota</taxon>
        <taxon>Neoptera</taxon>
        <taxon>Endopterygota</taxon>
        <taxon>Diptera</taxon>
        <taxon>Brachycera</taxon>
        <taxon>Muscomorpha</taxon>
        <taxon>Ephydroidea</taxon>
        <taxon>Drosophilidae</taxon>
        <taxon>Drosophila</taxon>
        <taxon>Sophophora</taxon>
    </lineage>
</organism>